<sequence>MQKRSKIVSILLDSLPHIKLFSGSTMVIKYGGAAQINPTLKEQFAIDIVLLYMLGIKPVIVHGGGKKITDLLGKLGIESKFVEGHRITCIDSMKIVEMVLSGDINKEITSFLNHHGVKAVGISGKDSSLLRAEPKDGGRFGYTGEVKEVKAEIIYNLLEKGFVPVIAPVAEGEEAGHPGYNINADTAASEIAKAIKARKVIFLTDTQGVLDGEGSLMESLTLSEVEENKRSGVINGGMIPKVDACVECVKGGVEKAHIIDGRVEHSLLLELFTSEGIGTEILRD</sequence>
<feature type="chain" id="PRO_0000112684" description="Acetylglutamate kinase">
    <location>
        <begin position="1"/>
        <end position="284"/>
    </location>
</feature>
<feature type="binding site" evidence="1">
    <location>
        <begin position="64"/>
        <end position="65"/>
    </location>
    <ligand>
        <name>substrate</name>
    </ligand>
</feature>
<feature type="binding site" evidence="1">
    <location>
        <position position="86"/>
    </location>
    <ligand>
        <name>substrate</name>
    </ligand>
</feature>
<feature type="binding site" evidence="1">
    <location>
        <position position="181"/>
    </location>
    <ligand>
        <name>substrate</name>
    </ligand>
</feature>
<feature type="site" description="Transition state stabilizer" evidence="1">
    <location>
        <position position="29"/>
    </location>
</feature>
<feature type="site" description="Transition state stabilizer" evidence="1">
    <location>
        <position position="241"/>
    </location>
</feature>
<protein>
    <recommendedName>
        <fullName evidence="1">Acetylglutamate kinase</fullName>
        <ecNumber evidence="1">2.7.2.8</ecNumber>
    </recommendedName>
    <alternativeName>
        <fullName evidence="1">N-acetyl-L-glutamate 5-phosphotransferase</fullName>
    </alternativeName>
    <alternativeName>
        <fullName evidence="1">NAG kinase</fullName>
        <shortName evidence="1">NAGK</shortName>
    </alternativeName>
</protein>
<comment type="function">
    <text evidence="1">Catalyzes the ATP-dependent phosphorylation of N-acetyl-L-glutamate.</text>
</comment>
<comment type="catalytic activity">
    <reaction evidence="1">
        <text>N-acetyl-L-glutamate + ATP = N-acetyl-L-glutamyl 5-phosphate + ADP</text>
        <dbReference type="Rhea" id="RHEA:14629"/>
        <dbReference type="ChEBI" id="CHEBI:30616"/>
        <dbReference type="ChEBI" id="CHEBI:44337"/>
        <dbReference type="ChEBI" id="CHEBI:57936"/>
        <dbReference type="ChEBI" id="CHEBI:456216"/>
        <dbReference type="EC" id="2.7.2.8"/>
    </reaction>
</comment>
<comment type="pathway">
    <text evidence="1">Amino-acid biosynthesis; L-arginine biosynthesis; N(2)-acetyl-L-ornithine from L-glutamate: step 2/4.</text>
</comment>
<comment type="subcellular location">
    <subcellularLocation>
        <location evidence="1">Cytoplasm</location>
    </subcellularLocation>
</comment>
<comment type="similarity">
    <text evidence="1">Belongs to the acetylglutamate kinase family. ArgB subfamily.</text>
</comment>
<dbReference type="EC" id="2.7.2.8" evidence="1"/>
<dbReference type="EMBL" id="BX571662">
    <property type="protein sequence ID" value="CAE11135.1"/>
    <property type="molecule type" value="Genomic_DNA"/>
</dbReference>
<dbReference type="RefSeq" id="WP_011139917.1">
    <property type="nucleotide sequence ID" value="NC_005090.1"/>
</dbReference>
<dbReference type="SMR" id="Q7M7Q9"/>
<dbReference type="STRING" id="273121.WS2140"/>
<dbReference type="KEGG" id="wsu:WS2140"/>
<dbReference type="eggNOG" id="COG0548">
    <property type="taxonomic scope" value="Bacteria"/>
</dbReference>
<dbReference type="HOGENOM" id="CLU_053680_0_0_7"/>
<dbReference type="UniPathway" id="UPA00068">
    <property type="reaction ID" value="UER00107"/>
</dbReference>
<dbReference type="Proteomes" id="UP000000422">
    <property type="component" value="Chromosome"/>
</dbReference>
<dbReference type="GO" id="GO:0005737">
    <property type="term" value="C:cytoplasm"/>
    <property type="evidence" value="ECO:0007669"/>
    <property type="project" value="UniProtKB-SubCell"/>
</dbReference>
<dbReference type="GO" id="GO:0003991">
    <property type="term" value="F:acetylglutamate kinase activity"/>
    <property type="evidence" value="ECO:0007669"/>
    <property type="project" value="UniProtKB-UniRule"/>
</dbReference>
<dbReference type="GO" id="GO:0005524">
    <property type="term" value="F:ATP binding"/>
    <property type="evidence" value="ECO:0007669"/>
    <property type="project" value="UniProtKB-UniRule"/>
</dbReference>
<dbReference type="GO" id="GO:0042450">
    <property type="term" value="P:arginine biosynthetic process via ornithine"/>
    <property type="evidence" value="ECO:0007669"/>
    <property type="project" value="UniProtKB-UniRule"/>
</dbReference>
<dbReference type="GO" id="GO:0006526">
    <property type="term" value="P:L-arginine biosynthetic process"/>
    <property type="evidence" value="ECO:0007669"/>
    <property type="project" value="UniProtKB-UniPathway"/>
</dbReference>
<dbReference type="CDD" id="cd04250">
    <property type="entry name" value="AAK_NAGK-C"/>
    <property type="match status" value="1"/>
</dbReference>
<dbReference type="FunFam" id="3.40.1160.10:FF:000004">
    <property type="entry name" value="Acetylglutamate kinase"/>
    <property type="match status" value="1"/>
</dbReference>
<dbReference type="Gene3D" id="3.40.1160.10">
    <property type="entry name" value="Acetylglutamate kinase-like"/>
    <property type="match status" value="1"/>
</dbReference>
<dbReference type="HAMAP" id="MF_00082">
    <property type="entry name" value="ArgB"/>
    <property type="match status" value="1"/>
</dbReference>
<dbReference type="InterPro" id="IPR036393">
    <property type="entry name" value="AceGlu_kinase-like_sf"/>
</dbReference>
<dbReference type="InterPro" id="IPR004662">
    <property type="entry name" value="AcgluKinase_fam"/>
</dbReference>
<dbReference type="InterPro" id="IPR037528">
    <property type="entry name" value="ArgB"/>
</dbReference>
<dbReference type="InterPro" id="IPR001048">
    <property type="entry name" value="Asp/Glu/Uridylate_kinase"/>
</dbReference>
<dbReference type="InterPro" id="IPR001057">
    <property type="entry name" value="Glu/AcGlu_kinase"/>
</dbReference>
<dbReference type="InterPro" id="IPR041727">
    <property type="entry name" value="NAGK-C"/>
</dbReference>
<dbReference type="NCBIfam" id="TIGR00761">
    <property type="entry name" value="argB"/>
    <property type="match status" value="1"/>
</dbReference>
<dbReference type="PANTHER" id="PTHR23342">
    <property type="entry name" value="N-ACETYLGLUTAMATE SYNTHASE"/>
    <property type="match status" value="1"/>
</dbReference>
<dbReference type="PANTHER" id="PTHR23342:SF0">
    <property type="entry name" value="N-ACETYLGLUTAMATE SYNTHASE, MITOCHONDRIAL"/>
    <property type="match status" value="1"/>
</dbReference>
<dbReference type="Pfam" id="PF00696">
    <property type="entry name" value="AA_kinase"/>
    <property type="match status" value="1"/>
</dbReference>
<dbReference type="PIRSF" id="PIRSF000728">
    <property type="entry name" value="NAGK"/>
    <property type="match status" value="1"/>
</dbReference>
<dbReference type="PRINTS" id="PR00474">
    <property type="entry name" value="GLU5KINASE"/>
</dbReference>
<dbReference type="SUPFAM" id="SSF53633">
    <property type="entry name" value="Carbamate kinase-like"/>
    <property type="match status" value="1"/>
</dbReference>
<evidence type="ECO:0000255" key="1">
    <source>
        <dbReference type="HAMAP-Rule" id="MF_00082"/>
    </source>
</evidence>
<name>ARGB_WOLSU</name>
<keyword id="KW-0028">Amino-acid biosynthesis</keyword>
<keyword id="KW-0055">Arginine biosynthesis</keyword>
<keyword id="KW-0067">ATP-binding</keyword>
<keyword id="KW-0963">Cytoplasm</keyword>
<keyword id="KW-0418">Kinase</keyword>
<keyword id="KW-0547">Nucleotide-binding</keyword>
<keyword id="KW-1185">Reference proteome</keyword>
<keyword id="KW-0808">Transferase</keyword>
<organism>
    <name type="scientific">Wolinella succinogenes (strain ATCC 29543 / DSM 1740 / CCUG 13145 / JCM 31913 / LMG 7466 / NCTC 11488 / FDC 602W)</name>
    <name type="common">Vibrio succinogenes</name>
    <dbReference type="NCBI Taxonomy" id="273121"/>
    <lineage>
        <taxon>Bacteria</taxon>
        <taxon>Pseudomonadati</taxon>
        <taxon>Campylobacterota</taxon>
        <taxon>Epsilonproteobacteria</taxon>
        <taxon>Campylobacterales</taxon>
        <taxon>Helicobacteraceae</taxon>
        <taxon>Wolinella</taxon>
    </lineage>
</organism>
<reference key="1">
    <citation type="journal article" date="2003" name="Proc. Natl. Acad. Sci. U.S.A.">
        <title>Complete genome sequence and analysis of Wolinella succinogenes.</title>
        <authorList>
            <person name="Baar C."/>
            <person name="Eppinger M."/>
            <person name="Raddatz G."/>
            <person name="Simon J."/>
            <person name="Lanz C."/>
            <person name="Klimmek O."/>
            <person name="Nandakumar R."/>
            <person name="Gross R."/>
            <person name="Rosinus A."/>
            <person name="Keller H."/>
            <person name="Jagtap P."/>
            <person name="Linke B."/>
            <person name="Meyer F."/>
            <person name="Lederer H."/>
            <person name="Schuster S.C."/>
        </authorList>
    </citation>
    <scope>NUCLEOTIDE SEQUENCE [LARGE SCALE GENOMIC DNA]</scope>
    <source>
        <strain>ATCC 29543 / DSM 1740 / CCUG 13145 / JCM 31913 / LMG 7466 / NCTC 11488 / FDC 602W</strain>
    </source>
</reference>
<accession>Q7M7Q9</accession>
<gene>
    <name evidence="1" type="primary">argB</name>
    <name type="ordered locus">WS2140</name>
</gene>
<proteinExistence type="inferred from homology"/>